<evidence type="ECO:0000255" key="1">
    <source>
        <dbReference type="HAMAP-Rule" id="MF_00011"/>
    </source>
</evidence>
<comment type="function">
    <text evidence="1">Plays an important role in the de novo pathway of purine nucleotide biosynthesis. Catalyzes the first committed step in the biosynthesis of AMP from IMP.</text>
</comment>
<comment type="catalytic activity">
    <reaction evidence="1">
        <text>IMP + L-aspartate + GTP = N(6)-(1,2-dicarboxyethyl)-AMP + GDP + phosphate + 2 H(+)</text>
        <dbReference type="Rhea" id="RHEA:15753"/>
        <dbReference type="ChEBI" id="CHEBI:15378"/>
        <dbReference type="ChEBI" id="CHEBI:29991"/>
        <dbReference type="ChEBI" id="CHEBI:37565"/>
        <dbReference type="ChEBI" id="CHEBI:43474"/>
        <dbReference type="ChEBI" id="CHEBI:57567"/>
        <dbReference type="ChEBI" id="CHEBI:58053"/>
        <dbReference type="ChEBI" id="CHEBI:58189"/>
        <dbReference type="EC" id="6.3.4.4"/>
    </reaction>
</comment>
<comment type="cofactor">
    <cofactor evidence="1">
        <name>Mg(2+)</name>
        <dbReference type="ChEBI" id="CHEBI:18420"/>
    </cofactor>
    <text evidence="1">Binds 1 Mg(2+) ion per subunit.</text>
</comment>
<comment type="pathway">
    <text evidence="1">Purine metabolism; AMP biosynthesis via de novo pathway; AMP from IMP: step 1/2.</text>
</comment>
<comment type="subunit">
    <text evidence="1">Homodimer.</text>
</comment>
<comment type="subcellular location">
    <subcellularLocation>
        <location evidence="1">Cytoplasm</location>
    </subcellularLocation>
</comment>
<comment type="similarity">
    <text evidence="1">Belongs to the adenylosuccinate synthetase family.</text>
</comment>
<dbReference type="EC" id="6.3.4.4" evidence="1"/>
<dbReference type="EMBL" id="AM167904">
    <property type="protein sequence ID" value="CAJ49943.1"/>
    <property type="molecule type" value="Genomic_DNA"/>
</dbReference>
<dbReference type="RefSeq" id="WP_012417994.1">
    <property type="nucleotide sequence ID" value="NC_010645.1"/>
</dbReference>
<dbReference type="SMR" id="Q2KYA7"/>
<dbReference type="STRING" id="360910.BAV2333"/>
<dbReference type="GeneID" id="92934490"/>
<dbReference type="KEGG" id="bav:BAV2333"/>
<dbReference type="eggNOG" id="COG0104">
    <property type="taxonomic scope" value="Bacteria"/>
</dbReference>
<dbReference type="HOGENOM" id="CLU_029848_0_0_4"/>
<dbReference type="OrthoDB" id="9807553at2"/>
<dbReference type="UniPathway" id="UPA00075">
    <property type="reaction ID" value="UER00335"/>
</dbReference>
<dbReference type="Proteomes" id="UP000001977">
    <property type="component" value="Chromosome"/>
</dbReference>
<dbReference type="GO" id="GO:0005737">
    <property type="term" value="C:cytoplasm"/>
    <property type="evidence" value="ECO:0007669"/>
    <property type="project" value="UniProtKB-SubCell"/>
</dbReference>
<dbReference type="GO" id="GO:0004019">
    <property type="term" value="F:adenylosuccinate synthase activity"/>
    <property type="evidence" value="ECO:0007669"/>
    <property type="project" value="UniProtKB-UniRule"/>
</dbReference>
<dbReference type="GO" id="GO:0005525">
    <property type="term" value="F:GTP binding"/>
    <property type="evidence" value="ECO:0007669"/>
    <property type="project" value="UniProtKB-UniRule"/>
</dbReference>
<dbReference type="GO" id="GO:0000287">
    <property type="term" value="F:magnesium ion binding"/>
    <property type="evidence" value="ECO:0007669"/>
    <property type="project" value="UniProtKB-UniRule"/>
</dbReference>
<dbReference type="GO" id="GO:0044208">
    <property type="term" value="P:'de novo' AMP biosynthetic process"/>
    <property type="evidence" value="ECO:0007669"/>
    <property type="project" value="UniProtKB-UniRule"/>
</dbReference>
<dbReference type="GO" id="GO:0046040">
    <property type="term" value="P:IMP metabolic process"/>
    <property type="evidence" value="ECO:0007669"/>
    <property type="project" value="TreeGrafter"/>
</dbReference>
<dbReference type="CDD" id="cd03108">
    <property type="entry name" value="AdSS"/>
    <property type="match status" value="1"/>
</dbReference>
<dbReference type="FunFam" id="1.10.300.10:FF:000001">
    <property type="entry name" value="Adenylosuccinate synthetase"/>
    <property type="match status" value="1"/>
</dbReference>
<dbReference type="FunFam" id="3.90.170.10:FF:000001">
    <property type="entry name" value="Adenylosuccinate synthetase"/>
    <property type="match status" value="1"/>
</dbReference>
<dbReference type="Gene3D" id="3.40.440.10">
    <property type="entry name" value="Adenylosuccinate Synthetase, subunit A, domain 1"/>
    <property type="match status" value="1"/>
</dbReference>
<dbReference type="Gene3D" id="1.10.300.10">
    <property type="entry name" value="Adenylosuccinate Synthetase, subunit A, domain 2"/>
    <property type="match status" value="1"/>
</dbReference>
<dbReference type="Gene3D" id="3.90.170.10">
    <property type="entry name" value="Adenylosuccinate Synthetase, subunit A, domain 3"/>
    <property type="match status" value="1"/>
</dbReference>
<dbReference type="HAMAP" id="MF_00011">
    <property type="entry name" value="Adenylosucc_synth"/>
    <property type="match status" value="1"/>
</dbReference>
<dbReference type="InterPro" id="IPR018220">
    <property type="entry name" value="Adenylosuccin_syn_GTP-bd"/>
</dbReference>
<dbReference type="InterPro" id="IPR033128">
    <property type="entry name" value="Adenylosuccin_syn_Lys_AS"/>
</dbReference>
<dbReference type="InterPro" id="IPR042109">
    <property type="entry name" value="Adenylosuccinate_synth_dom1"/>
</dbReference>
<dbReference type="InterPro" id="IPR042110">
    <property type="entry name" value="Adenylosuccinate_synth_dom2"/>
</dbReference>
<dbReference type="InterPro" id="IPR042111">
    <property type="entry name" value="Adenylosuccinate_synth_dom3"/>
</dbReference>
<dbReference type="InterPro" id="IPR001114">
    <property type="entry name" value="Adenylosuccinate_synthetase"/>
</dbReference>
<dbReference type="InterPro" id="IPR027417">
    <property type="entry name" value="P-loop_NTPase"/>
</dbReference>
<dbReference type="NCBIfam" id="NF002223">
    <property type="entry name" value="PRK01117.1"/>
    <property type="match status" value="1"/>
</dbReference>
<dbReference type="NCBIfam" id="TIGR00184">
    <property type="entry name" value="purA"/>
    <property type="match status" value="1"/>
</dbReference>
<dbReference type="PANTHER" id="PTHR11846">
    <property type="entry name" value="ADENYLOSUCCINATE SYNTHETASE"/>
    <property type="match status" value="1"/>
</dbReference>
<dbReference type="PANTHER" id="PTHR11846:SF0">
    <property type="entry name" value="ADENYLOSUCCINATE SYNTHETASE"/>
    <property type="match status" value="1"/>
</dbReference>
<dbReference type="Pfam" id="PF00709">
    <property type="entry name" value="Adenylsucc_synt"/>
    <property type="match status" value="1"/>
</dbReference>
<dbReference type="SMART" id="SM00788">
    <property type="entry name" value="Adenylsucc_synt"/>
    <property type="match status" value="1"/>
</dbReference>
<dbReference type="SUPFAM" id="SSF52540">
    <property type="entry name" value="P-loop containing nucleoside triphosphate hydrolases"/>
    <property type="match status" value="1"/>
</dbReference>
<dbReference type="PROSITE" id="PS01266">
    <property type="entry name" value="ADENYLOSUCCIN_SYN_1"/>
    <property type="match status" value="1"/>
</dbReference>
<dbReference type="PROSITE" id="PS00513">
    <property type="entry name" value="ADENYLOSUCCIN_SYN_2"/>
    <property type="match status" value="1"/>
</dbReference>
<reference key="1">
    <citation type="journal article" date="2006" name="J. Bacteriol.">
        <title>Comparison of the genome sequence of the poultry pathogen Bordetella avium with those of B. bronchiseptica, B. pertussis, and B. parapertussis reveals extensive diversity in surface structures associated with host interaction.</title>
        <authorList>
            <person name="Sebaihia M."/>
            <person name="Preston A."/>
            <person name="Maskell D.J."/>
            <person name="Kuzmiak H."/>
            <person name="Connell T.D."/>
            <person name="King N.D."/>
            <person name="Orndorff P.E."/>
            <person name="Miyamoto D.M."/>
            <person name="Thomson N.R."/>
            <person name="Harris D."/>
            <person name="Goble A."/>
            <person name="Lord A."/>
            <person name="Murphy L."/>
            <person name="Quail M.A."/>
            <person name="Rutter S."/>
            <person name="Squares R."/>
            <person name="Squares S."/>
            <person name="Woodward J."/>
            <person name="Parkhill J."/>
            <person name="Temple L.M."/>
        </authorList>
    </citation>
    <scope>NUCLEOTIDE SEQUENCE [LARGE SCALE GENOMIC DNA]</scope>
    <source>
        <strain>197N</strain>
    </source>
</reference>
<keyword id="KW-0963">Cytoplasm</keyword>
<keyword id="KW-0342">GTP-binding</keyword>
<keyword id="KW-0436">Ligase</keyword>
<keyword id="KW-0460">Magnesium</keyword>
<keyword id="KW-0479">Metal-binding</keyword>
<keyword id="KW-0547">Nucleotide-binding</keyword>
<keyword id="KW-0658">Purine biosynthesis</keyword>
<keyword id="KW-1185">Reference proteome</keyword>
<organism>
    <name type="scientific">Bordetella avium (strain 197N)</name>
    <dbReference type="NCBI Taxonomy" id="360910"/>
    <lineage>
        <taxon>Bacteria</taxon>
        <taxon>Pseudomonadati</taxon>
        <taxon>Pseudomonadota</taxon>
        <taxon>Betaproteobacteria</taxon>
        <taxon>Burkholderiales</taxon>
        <taxon>Alcaligenaceae</taxon>
        <taxon>Bordetella</taxon>
    </lineage>
</organism>
<proteinExistence type="inferred from homology"/>
<feature type="chain" id="PRO_0000321794" description="Adenylosuccinate synthetase">
    <location>
        <begin position="1"/>
        <end position="431"/>
    </location>
</feature>
<feature type="active site" description="Proton acceptor" evidence="1">
    <location>
        <position position="14"/>
    </location>
</feature>
<feature type="active site" description="Proton donor" evidence="1">
    <location>
        <position position="42"/>
    </location>
</feature>
<feature type="binding site" evidence="1">
    <location>
        <begin position="13"/>
        <end position="19"/>
    </location>
    <ligand>
        <name>GTP</name>
        <dbReference type="ChEBI" id="CHEBI:37565"/>
    </ligand>
</feature>
<feature type="binding site" description="in other chain" evidence="1">
    <location>
        <begin position="14"/>
        <end position="17"/>
    </location>
    <ligand>
        <name>IMP</name>
        <dbReference type="ChEBI" id="CHEBI:58053"/>
        <note>ligand shared between dimeric partners</note>
    </ligand>
</feature>
<feature type="binding site" evidence="1">
    <location>
        <position position="14"/>
    </location>
    <ligand>
        <name>Mg(2+)</name>
        <dbReference type="ChEBI" id="CHEBI:18420"/>
    </ligand>
</feature>
<feature type="binding site" description="in other chain" evidence="1">
    <location>
        <begin position="39"/>
        <end position="42"/>
    </location>
    <ligand>
        <name>IMP</name>
        <dbReference type="ChEBI" id="CHEBI:58053"/>
        <note>ligand shared between dimeric partners</note>
    </ligand>
</feature>
<feature type="binding site" evidence="1">
    <location>
        <begin position="41"/>
        <end position="43"/>
    </location>
    <ligand>
        <name>GTP</name>
        <dbReference type="ChEBI" id="CHEBI:37565"/>
    </ligand>
</feature>
<feature type="binding site" evidence="1">
    <location>
        <position position="41"/>
    </location>
    <ligand>
        <name>Mg(2+)</name>
        <dbReference type="ChEBI" id="CHEBI:18420"/>
    </ligand>
</feature>
<feature type="binding site" description="in other chain" evidence="1">
    <location>
        <position position="130"/>
    </location>
    <ligand>
        <name>IMP</name>
        <dbReference type="ChEBI" id="CHEBI:58053"/>
        <note>ligand shared between dimeric partners</note>
    </ligand>
</feature>
<feature type="binding site" evidence="1">
    <location>
        <position position="144"/>
    </location>
    <ligand>
        <name>IMP</name>
        <dbReference type="ChEBI" id="CHEBI:58053"/>
        <note>ligand shared between dimeric partners</note>
    </ligand>
</feature>
<feature type="binding site" description="in other chain" evidence="1">
    <location>
        <position position="225"/>
    </location>
    <ligand>
        <name>IMP</name>
        <dbReference type="ChEBI" id="CHEBI:58053"/>
        <note>ligand shared between dimeric partners</note>
    </ligand>
</feature>
<feature type="binding site" description="in other chain" evidence="1">
    <location>
        <position position="240"/>
    </location>
    <ligand>
        <name>IMP</name>
        <dbReference type="ChEBI" id="CHEBI:58053"/>
        <note>ligand shared between dimeric partners</note>
    </ligand>
</feature>
<feature type="binding site" evidence="1">
    <location>
        <begin position="300"/>
        <end position="306"/>
    </location>
    <ligand>
        <name>substrate</name>
    </ligand>
</feature>
<feature type="binding site" description="in other chain" evidence="1">
    <location>
        <position position="304"/>
    </location>
    <ligand>
        <name>IMP</name>
        <dbReference type="ChEBI" id="CHEBI:58053"/>
        <note>ligand shared between dimeric partners</note>
    </ligand>
</feature>
<feature type="binding site" evidence="1">
    <location>
        <position position="306"/>
    </location>
    <ligand>
        <name>GTP</name>
        <dbReference type="ChEBI" id="CHEBI:37565"/>
    </ligand>
</feature>
<feature type="binding site" evidence="1">
    <location>
        <begin position="332"/>
        <end position="334"/>
    </location>
    <ligand>
        <name>GTP</name>
        <dbReference type="ChEBI" id="CHEBI:37565"/>
    </ligand>
</feature>
<feature type="binding site" evidence="1">
    <location>
        <begin position="414"/>
        <end position="416"/>
    </location>
    <ligand>
        <name>GTP</name>
        <dbReference type="ChEBI" id="CHEBI:37565"/>
    </ligand>
</feature>
<sequence>MSKNVVVIGTQWGDEGKGKIVDWLAESVQGVVRFQGGHNAGHTLWINGKKTILRLIPSGIMHPGVTCYIGNGVVLSPEALLKEIEELEAAGLDVRSRLQISEICPLILPYHVAVDKAREARKGESKIGTTGRGIGPAYEDKVARRALRVQDLFTPDIFDAKLDEVLDYHNFVLTQYLGAQAVSANEVRDQAMALAPAIKPMVRDVSSSIFLAQQQGARFLFEGAQGALLDVDHGTYPYVTSSNCVAGAASAGAGVGPQSLDYVLGITKAYTTRVGSGPFPTELLDEVGSRLATVGKEFGSVTGRPRRCGWFDGAALKRSVRLNGISGLCITKLDVLDGLEKLQLGVGYRVNGEFRDVLPYGAHAVAQAEPVLEELPGWSESTVGVTEYSKLPLNARRYLERVAEVCGVPIDLVSTGPDRNETIVLRHPLKG</sequence>
<accession>Q2KYA7</accession>
<protein>
    <recommendedName>
        <fullName evidence="1">Adenylosuccinate synthetase</fullName>
        <shortName evidence="1">AMPSase</shortName>
        <shortName evidence="1">AdSS</shortName>
        <ecNumber evidence="1">6.3.4.4</ecNumber>
    </recommendedName>
    <alternativeName>
        <fullName evidence="1">IMP--aspartate ligase</fullName>
    </alternativeName>
</protein>
<gene>
    <name evidence="1" type="primary">purA</name>
    <name type="ordered locus">BAV2333</name>
</gene>
<name>PURA_BORA1</name>